<name>Y746_CHLPN</name>
<keyword id="KW-0677">Repeat</keyword>
<feature type="chain" id="PRO_0000220643" description="UPF0159 protein CPn_0746/CP_1126/CPj0746/CpB0774">
    <location>
        <begin position="1"/>
        <end position="531"/>
    </location>
</feature>
<feature type="domain" description="ThyX 1" evidence="1">
    <location>
        <begin position="38"/>
        <end position="274"/>
    </location>
</feature>
<feature type="domain" description="ThyX 2" evidence="1">
    <location>
        <begin position="309"/>
        <end position="511"/>
    </location>
</feature>
<organism>
    <name type="scientific">Chlamydia pneumoniae</name>
    <name type="common">Chlamydophila pneumoniae</name>
    <dbReference type="NCBI Taxonomy" id="83558"/>
    <lineage>
        <taxon>Bacteria</taxon>
        <taxon>Pseudomonadati</taxon>
        <taxon>Chlamydiota</taxon>
        <taxon>Chlamydiia</taxon>
        <taxon>Chlamydiales</taxon>
        <taxon>Chlamydiaceae</taxon>
        <taxon>Chlamydia/Chlamydophila group</taxon>
        <taxon>Chlamydia</taxon>
    </lineage>
</organism>
<protein>
    <recommendedName>
        <fullName>UPF0159 protein CPn_0746/CP_1126/CPj0746/CpB0774</fullName>
    </recommendedName>
</protein>
<sequence length="531" mass="61146">MLGKEEEFTCKQKQCLSHFVTNLTSDVFALKNLPEVVKGALFSKYSRSVLGLRALLLKEFLSNEEDGDVCDEAYDFETDVQKAADFYQRVLDNFGDDSVGELGGAHLAMENVSILAAKVLEDARIGGSPLEKSTRYVYFDQKVRGEYLYYRDPILMTSAFKDMFLGTCDFLFDTYSALIPQVRAYFEKLYPKDSKTPASAYATSLRAKVLDCIRGLLPAATLTNLGFFGNGRFWQNLIHKLQGHNLAELRRLGDESLTELMKVIPSFVSRAEPHHHHHQAMMQYRRALKEQLKGLAEQATFSEEMSSSPSVQLVYGDPDGIYKVAAGFLFPYSNRSLTDLIDYCKKMPHEDLVQILESSVSARENRRHKSPRGLECVEFGFDILADFGAYRDLQRHRTLTQERQLLSTHHGYNFPVELLDTPMEKSYREAMERANETYNEIVQEFPEEAQYMVPMAYNIRWFFHVNARALQWICELRSQPQGHQNYRTIATGLVREVVKFNPMYELFFKFVDYSDIDLGRLNQEMRKEPTT</sequence>
<accession>Q9Z7F9</accession>
<gene>
    <name type="ordered locus">CPn_0746</name>
    <name type="ordered locus">CP_1126</name>
    <name type="ordered locus">CPj0746</name>
    <name type="ordered locus">CpB0774</name>
</gene>
<proteinExistence type="inferred from homology"/>
<dbReference type="EMBL" id="AE001363">
    <property type="protein sequence ID" value="AAD18885.1"/>
    <property type="molecule type" value="Genomic_DNA"/>
</dbReference>
<dbReference type="EMBL" id="AE002161">
    <property type="protein sequence ID" value="AAF38892.1"/>
    <property type="molecule type" value="Genomic_DNA"/>
</dbReference>
<dbReference type="EMBL" id="BA000008">
    <property type="protein sequence ID" value="BAA98953.1"/>
    <property type="molecule type" value="Genomic_DNA"/>
</dbReference>
<dbReference type="EMBL" id="AE009440">
    <property type="protein sequence ID" value="AAP98703.1"/>
    <property type="molecule type" value="Genomic_DNA"/>
</dbReference>
<dbReference type="PIR" id="G86583">
    <property type="entry name" value="G86583"/>
</dbReference>
<dbReference type="PIR" id="H72040">
    <property type="entry name" value="H72040"/>
</dbReference>
<dbReference type="RefSeq" id="NP_224942.1">
    <property type="nucleotide sequence ID" value="NC_000922.1"/>
</dbReference>
<dbReference type="RefSeq" id="WP_010883384.1">
    <property type="nucleotide sequence ID" value="NZ_LN847257.1"/>
</dbReference>
<dbReference type="SMR" id="Q9Z7F9"/>
<dbReference type="STRING" id="406984.CPK_ORF00152"/>
<dbReference type="GeneID" id="45050800"/>
<dbReference type="KEGG" id="cpa:CP_1126"/>
<dbReference type="KEGG" id="cpj:CPj0746"/>
<dbReference type="KEGG" id="cpn:CPn_0746"/>
<dbReference type="KEGG" id="cpt:CpB0774"/>
<dbReference type="PATRIC" id="fig|115713.3.peg.823"/>
<dbReference type="eggNOG" id="COG1351">
    <property type="taxonomic scope" value="Bacteria"/>
</dbReference>
<dbReference type="HOGENOM" id="CLU_024745_0_0_0"/>
<dbReference type="OrthoDB" id="9780625at2"/>
<dbReference type="Proteomes" id="UP000000583">
    <property type="component" value="Chromosome"/>
</dbReference>
<dbReference type="Proteomes" id="UP000000801">
    <property type="component" value="Chromosome"/>
</dbReference>
<dbReference type="GO" id="GO:0050660">
    <property type="term" value="F:flavin adenine dinucleotide binding"/>
    <property type="evidence" value="ECO:0007669"/>
    <property type="project" value="InterPro"/>
</dbReference>
<dbReference type="GO" id="GO:0070402">
    <property type="term" value="F:NADPH binding"/>
    <property type="evidence" value="ECO:0007669"/>
    <property type="project" value="TreeGrafter"/>
</dbReference>
<dbReference type="GO" id="GO:0050797">
    <property type="term" value="F:thymidylate synthase (FAD) activity"/>
    <property type="evidence" value="ECO:0007669"/>
    <property type="project" value="InterPro"/>
</dbReference>
<dbReference type="GO" id="GO:0004799">
    <property type="term" value="F:thymidylate synthase activity"/>
    <property type="evidence" value="ECO:0007669"/>
    <property type="project" value="TreeGrafter"/>
</dbReference>
<dbReference type="GO" id="GO:0006231">
    <property type="term" value="P:dTMP biosynthetic process"/>
    <property type="evidence" value="ECO:0007669"/>
    <property type="project" value="InterPro"/>
</dbReference>
<dbReference type="CDD" id="cd20175">
    <property type="entry name" value="ThyX"/>
    <property type="match status" value="1"/>
</dbReference>
<dbReference type="Gene3D" id="3.30.1360.170">
    <property type="match status" value="2"/>
</dbReference>
<dbReference type="InterPro" id="IPR003669">
    <property type="entry name" value="Thymidylate_synthase_ThyX"/>
</dbReference>
<dbReference type="InterPro" id="IPR036098">
    <property type="entry name" value="Thymidylate_synthase_ThyX_sf"/>
</dbReference>
<dbReference type="PANTHER" id="PTHR34934">
    <property type="entry name" value="FLAVIN-DEPENDENT THYMIDYLATE SYNTHASE"/>
    <property type="match status" value="1"/>
</dbReference>
<dbReference type="PANTHER" id="PTHR34934:SF1">
    <property type="entry name" value="FLAVIN-DEPENDENT THYMIDYLATE SYNTHASE"/>
    <property type="match status" value="1"/>
</dbReference>
<dbReference type="Pfam" id="PF02511">
    <property type="entry name" value="Thy1"/>
    <property type="match status" value="2"/>
</dbReference>
<dbReference type="SUPFAM" id="SSF69796">
    <property type="entry name" value="Thymidylate synthase-complementing protein Thy1"/>
    <property type="match status" value="2"/>
</dbReference>
<dbReference type="PROSITE" id="PS51331">
    <property type="entry name" value="THYX"/>
    <property type="match status" value="2"/>
</dbReference>
<reference key="1">
    <citation type="journal article" date="1999" name="Nat. Genet.">
        <title>Comparative genomes of Chlamydia pneumoniae and C. trachomatis.</title>
        <authorList>
            <person name="Kalman S."/>
            <person name="Mitchell W.P."/>
            <person name="Marathe R."/>
            <person name="Lammel C.J."/>
            <person name="Fan J."/>
            <person name="Hyman R.W."/>
            <person name="Olinger L."/>
            <person name="Grimwood J."/>
            <person name="Davis R.W."/>
            <person name="Stephens R.S."/>
        </authorList>
    </citation>
    <scope>NUCLEOTIDE SEQUENCE [LARGE SCALE GENOMIC DNA]</scope>
    <source>
        <strain>CWL029</strain>
    </source>
</reference>
<reference key="2">
    <citation type="journal article" date="2000" name="Nucleic Acids Res.">
        <title>Genome sequences of Chlamydia trachomatis MoPn and Chlamydia pneumoniae AR39.</title>
        <authorList>
            <person name="Read T.D."/>
            <person name="Brunham R.C."/>
            <person name="Shen C."/>
            <person name="Gill S.R."/>
            <person name="Heidelberg J.F."/>
            <person name="White O."/>
            <person name="Hickey E.K."/>
            <person name="Peterson J.D."/>
            <person name="Utterback T.R."/>
            <person name="Berry K.J."/>
            <person name="Bass S."/>
            <person name="Linher K.D."/>
            <person name="Weidman J.F."/>
            <person name="Khouri H.M."/>
            <person name="Craven B."/>
            <person name="Bowman C."/>
            <person name="Dodson R.J."/>
            <person name="Gwinn M.L."/>
            <person name="Nelson W.C."/>
            <person name="DeBoy R.T."/>
            <person name="Kolonay J.F."/>
            <person name="McClarty G."/>
            <person name="Salzberg S.L."/>
            <person name="Eisen J.A."/>
            <person name="Fraser C.M."/>
        </authorList>
    </citation>
    <scope>NUCLEOTIDE SEQUENCE [LARGE SCALE GENOMIC DNA]</scope>
    <source>
        <strain>AR39</strain>
    </source>
</reference>
<reference key="3">
    <citation type="journal article" date="2000" name="Nucleic Acids Res.">
        <title>Comparison of whole genome sequences of Chlamydia pneumoniae J138 from Japan and CWL029 from USA.</title>
        <authorList>
            <person name="Shirai M."/>
            <person name="Hirakawa H."/>
            <person name="Kimoto M."/>
            <person name="Tabuchi M."/>
            <person name="Kishi F."/>
            <person name="Ouchi K."/>
            <person name="Shiba T."/>
            <person name="Ishii K."/>
            <person name="Hattori M."/>
            <person name="Kuhara S."/>
            <person name="Nakazawa T."/>
        </authorList>
    </citation>
    <scope>NUCLEOTIDE SEQUENCE [LARGE SCALE GENOMIC DNA]</scope>
    <source>
        <strain>J138</strain>
    </source>
</reference>
<reference key="4">
    <citation type="submission" date="2002-05" db="EMBL/GenBank/DDBJ databases">
        <title>The genome sequence of Chlamydia pneumoniae TW183 and comparison with other Chlamydia strains based on whole genome sequence analysis.</title>
        <authorList>
            <person name="Geng M.M."/>
            <person name="Schuhmacher A."/>
            <person name="Muehldorfer I."/>
            <person name="Bensch K.W."/>
            <person name="Schaefer K.P."/>
            <person name="Schneider S."/>
            <person name="Pohl T."/>
            <person name="Essig A."/>
            <person name="Marre R."/>
            <person name="Melchers K."/>
        </authorList>
    </citation>
    <scope>NUCLEOTIDE SEQUENCE [LARGE SCALE GENOMIC DNA]</scope>
    <source>
        <strain>TW-183</strain>
    </source>
</reference>
<comment type="similarity">
    <text evidence="2">Belongs to the UPF0159 family.</text>
</comment>
<evidence type="ECO:0000255" key="1">
    <source>
        <dbReference type="PROSITE-ProRule" id="PRU00661"/>
    </source>
</evidence>
<evidence type="ECO:0000305" key="2"/>